<protein>
    <recommendedName>
        <fullName>Probable enoyl-CoA hydratase EchA14</fullName>
        <ecNumber>4.2.1.17</ecNumber>
    </recommendedName>
</protein>
<accession>P9WNN5</accession>
<accession>L0T9S3</accession>
<accession>O53211</accession>
<accession>P64018</accession>
<feature type="chain" id="PRO_0000109343" description="Probable enoyl-CoA hydratase EchA14">
    <location>
        <begin position="1"/>
        <end position="256"/>
    </location>
</feature>
<feature type="region of interest" description="Disordered" evidence="2">
    <location>
        <begin position="235"/>
        <end position="256"/>
    </location>
</feature>
<reference key="1">
    <citation type="journal article" date="1998" name="Nature">
        <title>Deciphering the biology of Mycobacterium tuberculosis from the complete genome sequence.</title>
        <authorList>
            <person name="Cole S.T."/>
            <person name="Brosch R."/>
            <person name="Parkhill J."/>
            <person name="Garnier T."/>
            <person name="Churcher C.M."/>
            <person name="Harris D.E."/>
            <person name="Gordon S.V."/>
            <person name="Eiglmeier K."/>
            <person name="Gas S."/>
            <person name="Barry C.E. III"/>
            <person name="Tekaia F."/>
            <person name="Badcock K."/>
            <person name="Basham D."/>
            <person name="Brown D."/>
            <person name="Chillingworth T."/>
            <person name="Connor R."/>
            <person name="Davies R.M."/>
            <person name="Devlin K."/>
            <person name="Feltwell T."/>
            <person name="Gentles S."/>
            <person name="Hamlin N."/>
            <person name="Holroyd S."/>
            <person name="Hornsby T."/>
            <person name="Jagels K."/>
            <person name="Krogh A."/>
            <person name="McLean J."/>
            <person name="Moule S."/>
            <person name="Murphy L.D."/>
            <person name="Oliver S."/>
            <person name="Osborne J."/>
            <person name="Quail M.A."/>
            <person name="Rajandream M.A."/>
            <person name="Rogers J."/>
            <person name="Rutter S."/>
            <person name="Seeger K."/>
            <person name="Skelton S."/>
            <person name="Squares S."/>
            <person name="Squares R."/>
            <person name="Sulston J.E."/>
            <person name="Taylor K."/>
            <person name="Whitehead S."/>
            <person name="Barrell B.G."/>
        </authorList>
    </citation>
    <scope>NUCLEOTIDE SEQUENCE [LARGE SCALE GENOMIC DNA]</scope>
    <source>
        <strain>ATCC 25618 / H37Rv</strain>
    </source>
</reference>
<reference key="2">
    <citation type="journal article" date="2011" name="Mol. Cell. Proteomics">
        <title>Proteogenomic analysis of Mycobacterium tuberculosis by high resolution mass spectrometry.</title>
        <authorList>
            <person name="Kelkar D.S."/>
            <person name="Kumar D."/>
            <person name="Kumar P."/>
            <person name="Balakrishnan L."/>
            <person name="Muthusamy B."/>
            <person name="Yadav A.K."/>
            <person name="Shrivastava P."/>
            <person name="Marimuthu A."/>
            <person name="Anand S."/>
            <person name="Sundaram H."/>
            <person name="Kingsbury R."/>
            <person name="Harsha H.C."/>
            <person name="Nair B."/>
            <person name="Prasad T.S."/>
            <person name="Chauhan D.S."/>
            <person name="Katoch K."/>
            <person name="Katoch V.M."/>
            <person name="Kumar P."/>
            <person name="Chaerkady R."/>
            <person name="Ramachandran S."/>
            <person name="Dash D."/>
            <person name="Pandey A."/>
        </authorList>
    </citation>
    <scope>IDENTIFICATION BY MASS SPECTROMETRY [LARGE SCALE ANALYSIS]</scope>
    <source>
        <strain>ATCC 25618 / H37Rv</strain>
    </source>
</reference>
<gene>
    <name type="primary">echA14</name>
    <name type="ordered locus">Rv2486</name>
    <name type="ORF">MTV008.42</name>
</gene>
<organism>
    <name type="scientific">Mycobacterium tuberculosis (strain ATCC 25618 / H37Rv)</name>
    <dbReference type="NCBI Taxonomy" id="83332"/>
    <lineage>
        <taxon>Bacteria</taxon>
        <taxon>Bacillati</taxon>
        <taxon>Actinomycetota</taxon>
        <taxon>Actinomycetes</taxon>
        <taxon>Mycobacteriales</taxon>
        <taxon>Mycobacteriaceae</taxon>
        <taxon>Mycobacterium</taxon>
        <taxon>Mycobacterium tuberculosis complex</taxon>
    </lineage>
</organism>
<sequence length="256" mass="26280">MAQYDPVLLSVDKHVALITVNDPDRRNAVTDEMSAQLRAAIQRAEGDPDVHAVVVTGAGKAFCAGADLSALGAGVGDPAEPRLLRLYDGFMAVSSCNLPTIAAVNGAAVGAGLNLALAADVRIAGPAALFDARFQKLGLHPGGGATWMLQRAVGPQVARAALLFGMCFDAESAVRHGLALMVADDPVTAALELAAGPAAAPREVVLASKATMRATASPGSLDLEQHELAKRLELGPQAKSVQSPEFAARLAAAQHR</sequence>
<keyword id="KW-0276">Fatty acid metabolism</keyword>
<keyword id="KW-0443">Lipid metabolism</keyword>
<keyword id="KW-0456">Lyase</keyword>
<keyword id="KW-1185">Reference proteome</keyword>
<proteinExistence type="evidence at protein level"/>
<comment type="function">
    <text evidence="1">Could possibly oxidize fatty acids using specific components.</text>
</comment>
<comment type="catalytic activity">
    <reaction>
        <text>a (3S)-3-hydroxyacyl-CoA = a (2E)-enoyl-CoA + H2O</text>
        <dbReference type="Rhea" id="RHEA:16105"/>
        <dbReference type="ChEBI" id="CHEBI:15377"/>
        <dbReference type="ChEBI" id="CHEBI:57318"/>
        <dbReference type="ChEBI" id="CHEBI:58856"/>
        <dbReference type="EC" id="4.2.1.17"/>
    </reaction>
</comment>
<comment type="catalytic activity">
    <reaction>
        <text>a 4-saturated-(3S)-3-hydroxyacyl-CoA = a (3E)-enoyl-CoA + H2O</text>
        <dbReference type="Rhea" id="RHEA:20724"/>
        <dbReference type="ChEBI" id="CHEBI:15377"/>
        <dbReference type="ChEBI" id="CHEBI:58521"/>
        <dbReference type="ChEBI" id="CHEBI:137480"/>
        <dbReference type="EC" id="4.2.1.17"/>
    </reaction>
</comment>
<comment type="similarity">
    <text evidence="3">Belongs to the enoyl-CoA hydratase/isomerase family.</text>
</comment>
<name>ECH14_MYCTU</name>
<dbReference type="EC" id="4.2.1.17"/>
<dbReference type="EMBL" id="AL123456">
    <property type="protein sequence ID" value="CCP45280.1"/>
    <property type="molecule type" value="Genomic_DNA"/>
</dbReference>
<dbReference type="PIR" id="E70868">
    <property type="entry name" value="E70868"/>
</dbReference>
<dbReference type="RefSeq" id="NP_217002.1">
    <property type="nucleotide sequence ID" value="NC_000962.3"/>
</dbReference>
<dbReference type="RefSeq" id="WP_003412728.1">
    <property type="nucleotide sequence ID" value="NZ_NVQJ01000067.1"/>
</dbReference>
<dbReference type="SMR" id="P9WNN5"/>
<dbReference type="FunCoup" id="P9WNN5">
    <property type="interactions" value="101"/>
</dbReference>
<dbReference type="STRING" id="83332.Rv2486"/>
<dbReference type="PaxDb" id="83332-Rv2486"/>
<dbReference type="DNASU" id="887894"/>
<dbReference type="GeneID" id="887894"/>
<dbReference type="KEGG" id="mtu:Rv2486"/>
<dbReference type="KEGG" id="mtv:RVBD_2486"/>
<dbReference type="TubercuList" id="Rv2486"/>
<dbReference type="eggNOG" id="COG1024">
    <property type="taxonomic scope" value="Bacteria"/>
</dbReference>
<dbReference type="InParanoid" id="P9WNN5"/>
<dbReference type="OrthoDB" id="8452484at2"/>
<dbReference type="PhylomeDB" id="P9WNN5"/>
<dbReference type="Proteomes" id="UP000001584">
    <property type="component" value="Chromosome"/>
</dbReference>
<dbReference type="GO" id="GO:0004300">
    <property type="term" value="F:enoyl-CoA hydratase activity"/>
    <property type="evidence" value="ECO:0007669"/>
    <property type="project" value="UniProtKB-EC"/>
</dbReference>
<dbReference type="GO" id="GO:0006635">
    <property type="term" value="P:fatty acid beta-oxidation"/>
    <property type="evidence" value="ECO:0000318"/>
    <property type="project" value="GO_Central"/>
</dbReference>
<dbReference type="CDD" id="cd06558">
    <property type="entry name" value="crotonase-like"/>
    <property type="match status" value="1"/>
</dbReference>
<dbReference type="FunFam" id="3.90.226.10:FF:000096">
    <property type="entry name" value="Enoyl-CoA hydratase EchA14"/>
    <property type="match status" value="1"/>
</dbReference>
<dbReference type="Gene3D" id="3.90.226.10">
    <property type="entry name" value="2-enoyl-CoA Hydratase, Chain A, domain 1"/>
    <property type="match status" value="1"/>
</dbReference>
<dbReference type="InterPro" id="IPR029045">
    <property type="entry name" value="ClpP/crotonase-like_dom_sf"/>
</dbReference>
<dbReference type="InterPro" id="IPR018376">
    <property type="entry name" value="Enoyl-CoA_hyd/isom_CS"/>
</dbReference>
<dbReference type="InterPro" id="IPR001753">
    <property type="entry name" value="Enoyl-CoA_hydra/iso"/>
</dbReference>
<dbReference type="NCBIfam" id="NF004525">
    <property type="entry name" value="PRK05870.1"/>
    <property type="match status" value="1"/>
</dbReference>
<dbReference type="PANTHER" id="PTHR43802">
    <property type="entry name" value="ENOYL-COA HYDRATASE"/>
    <property type="match status" value="1"/>
</dbReference>
<dbReference type="PANTHER" id="PTHR43802:SF1">
    <property type="entry name" value="IP11341P-RELATED"/>
    <property type="match status" value="1"/>
</dbReference>
<dbReference type="Pfam" id="PF00378">
    <property type="entry name" value="ECH_1"/>
    <property type="match status" value="1"/>
</dbReference>
<dbReference type="SUPFAM" id="SSF52096">
    <property type="entry name" value="ClpP/crotonase"/>
    <property type="match status" value="1"/>
</dbReference>
<dbReference type="PROSITE" id="PS00166">
    <property type="entry name" value="ENOYL_COA_HYDRATASE"/>
    <property type="match status" value="1"/>
</dbReference>
<evidence type="ECO:0000250" key="1"/>
<evidence type="ECO:0000256" key="2">
    <source>
        <dbReference type="SAM" id="MobiDB-lite"/>
    </source>
</evidence>
<evidence type="ECO:0000305" key="3"/>